<dbReference type="EC" id="3.1.3.16" evidence="2"/>
<dbReference type="EMBL" id="AF525130">
    <property type="protein sequence ID" value="AAM88379.1"/>
    <property type="molecule type" value="mRNA"/>
</dbReference>
<dbReference type="RefSeq" id="NP_001003033.1">
    <property type="nucleotide sequence ID" value="NM_001003033.1"/>
</dbReference>
<dbReference type="SMR" id="Q8MJ46"/>
<dbReference type="FunCoup" id="Q8MJ46">
    <property type="interactions" value="2390"/>
</dbReference>
<dbReference type="STRING" id="9615.ENSCAFP00000030520"/>
<dbReference type="PaxDb" id="9612-ENSCAFP00000030520"/>
<dbReference type="GeneID" id="403557"/>
<dbReference type="KEGG" id="cfa:403557"/>
<dbReference type="CTD" id="5501"/>
<dbReference type="eggNOG" id="KOG0374">
    <property type="taxonomic scope" value="Eukaryota"/>
</dbReference>
<dbReference type="InParanoid" id="Q8MJ46"/>
<dbReference type="OrthoDB" id="1930084at2759"/>
<dbReference type="Proteomes" id="UP000002254">
    <property type="component" value="Unplaced"/>
</dbReference>
<dbReference type="Proteomes" id="UP000694429">
    <property type="component" value="Unplaced"/>
</dbReference>
<dbReference type="Proteomes" id="UP000694542">
    <property type="component" value="Unplaced"/>
</dbReference>
<dbReference type="Proteomes" id="UP000805418">
    <property type="component" value="Unplaced"/>
</dbReference>
<dbReference type="GO" id="GO:0032154">
    <property type="term" value="C:cleavage furrow"/>
    <property type="evidence" value="ECO:0007669"/>
    <property type="project" value="UniProtKB-SubCell"/>
</dbReference>
<dbReference type="GO" id="GO:0005737">
    <property type="term" value="C:cytoplasm"/>
    <property type="evidence" value="ECO:0000318"/>
    <property type="project" value="GO_Central"/>
</dbReference>
<dbReference type="GO" id="GO:0000776">
    <property type="term" value="C:kinetochore"/>
    <property type="evidence" value="ECO:0007669"/>
    <property type="project" value="UniProtKB-KW"/>
</dbReference>
<dbReference type="GO" id="GO:0005815">
    <property type="term" value="C:microtubule organizing center"/>
    <property type="evidence" value="ECO:0007669"/>
    <property type="project" value="UniProtKB-SubCell"/>
</dbReference>
<dbReference type="GO" id="GO:0030496">
    <property type="term" value="C:midbody"/>
    <property type="evidence" value="ECO:0007669"/>
    <property type="project" value="UniProtKB-SubCell"/>
</dbReference>
<dbReference type="GO" id="GO:0005739">
    <property type="term" value="C:mitochondrion"/>
    <property type="evidence" value="ECO:0000250"/>
    <property type="project" value="UniProtKB"/>
</dbReference>
<dbReference type="GO" id="GO:0016607">
    <property type="term" value="C:nuclear speck"/>
    <property type="evidence" value="ECO:0007669"/>
    <property type="project" value="UniProtKB-SubCell"/>
</dbReference>
<dbReference type="GO" id="GO:0005730">
    <property type="term" value="C:nucleolus"/>
    <property type="evidence" value="ECO:0007669"/>
    <property type="project" value="UniProtKB-SubCell"/>
</dbReference>
<dbReference type="GO" id="GO:0005634">
    <property type="term" value="C:nucleus"/>
    <property type="evidence" value="ECO:0000318"/>
    <property type="project" value="GO_Central"/>
</dbReference>
<dbReference type="GO" id="GO:0072357">
    <property type="term" value="C:PTW/PP1 phosphatase complex"/>
    <property type="evidence" value="ECO:0000250"/>
    <property type="project" value="UniProtKB"/>
</dbReference>
<dbReference type="GO" id="GO:0046872">
    <property type="term" value="F:metal ion binding"/>
    <property type="evidence" value="ECO:0007669"/>
    <property type="project" value="UniProtKB-KW"/>
</dbReference>
<dbReference type="GO" id="GO:0004722">
    <property type="term" value="F:protein serine/threonine phosphatase activity"/>
    <property type="evidence" value="ECO:0000250"/>
    <property type="project" value="UniProtKB"/>
</dbReference>
<dbReference type="GO" id="GO:0051301">
    <property type="term" value="P:cell division"/>
    <property type="evidence" value="ECO:0007669"/>
    <property type="project" value="UniProtKB-KW"/>
</dbReference>
<dbReference type="GO" id="GO:0005977">
    <property type="term" value="P:glycogen metabolic process"/>
    <property type="evidence" value="ECO:0007669"/>
    <property type="project" value="UniProtKB-KW"/>
</dbReference>
<dbReference type="CDD" id="cd07414">
    <property type="entry name" value="MPP_PP1_PPKL"/>
    <property type="match status" value="1"/>
</dbReference>
<dbReference type="FunFam" id="3.60.21.10:FF:000004">
    <property type="entry name" value="Serine/threonine-protein phosphatase"/>
    <property type="match status" value="1"/>
</dbReference>
<dbReference type="Gene3D" id="3.60.21.10">
    <property type="match status" value="1"/>
</dbReference>
<dbReference type="InterPro" id="IPR004843">
    <property type="entry name" value="Calcineurin-like_PHP_ApaH"/>
</dbReference>
<dbReference type="InterPro" id="IPR029052">
    <property type="entry name" value="Metallo-depent_PP-like"/>
</dbReference>
<dbReference type="InterPro" id="IPR050341">
    <property type="entry name" value="PP1_catalytic_subunit"/>
</dbReference>
<dbReference type="InterPro" id="IPR006186">
    <property type="entry name" value="Ser/Thr-sp_prot-phosphatase"/>
</dbReference>
<dbReference type="InterPro" id="IPR031675">
    <property type="entry name" value="STPPase_N"/>
</dbReference>
<dbReference type="PANTHER" id="PTHR11668">
    <property type="entry name" value="SERINE/THREONINE PROTEIN PHOSPHATASE"/>
    <property type="match status" value="1"/>
</dbReference>
<dbReference type="PANTHER" id="PTHR11668:SF204">
    <property type="entry name" value="SERINE_THREONINE-PROTEIN PHOSPHATASE PP1-GAMMA CATALYTIC SUBUNIT"/>
    <property type="match status" value="1"/>
</dbReference>
<dbReference type="Pfam" id="PF00149">
    <property type="entry name" value="Metallophos"/>
    <property type="match status" value="1"/>
</dbReference>
<dbReference type="Pfam" id="PF16891">
    <property type="entry name" value="STPPase_N"/>
    <property type="match status" value="1"/>
</dbReference>
<dbReference type="PRINTS" id="PR00114">
    <property type="entry name" value="STPHPHTASE"/>
</dbReference>
<dbReference type="SMART" id="SM00156">
    <property type="entry name" value="PP2Ac"/>
    <property type="match status" value="1"/>
</dbReference>
<dbReference type="SUPFAM" id="SSF56300">
    <property type="entry name" value="Metallo-dependent phosphatases"/>
    <property type="match status" value="1"/>
</dbReference>
<dbReference type="PROSITE" id="PS00125">
    <property type="entry name" value="SER_THR_PHOSPHATASE"/>
    <property type="match status" value="1"/>
</dbReference>
<comment type="function">
    <text evidence="2 3">Protein phosphatase that associates with over 200 regulatory proteins to form highly specific holoenzymes which dephosphorylate hundreds of biological targets. Protein phosphatase 1 (PP1) is essential for cell division, and participates in the regulation of glycogen metabolism, muscle contractility and protein synthesis. Dephosphorylates RPS6KB1. Involved in regulation of ionic conductances and long-term synaptic plasticity. May play an important role in dephosphorylating substrates such as the postsynaptic density-associated Ca(2+)/calmodulin dependent protein kinase II. Component of the PTW/PP1 phosphatase complex, which plays a role in the control of chromatin structure and cell cycle progression during the transition from mitosis into interphase. Regulates the recruitment of the SKA complex to kinetochores (By similarity). Core component of the SHOC2-MRAS-PP1c (SMP) holophosphatase complex that regulates the MAPK pathway activation (By similarity). Dephosphorylates MKI67 at the onset of anaphase (By similarity). The SMP complex specifically dephosphorylates the inhibitory phosphorylation at 'Ser-259' of RAF1 kinase, 'Ser-365' of BRAF kinase and 'Ser-214' of ARAF kinase, stimulating their kinase activities (By similarity). The SMP complex enhances the dephosphorylation activity and substrate specificity of PP1c (By similarity).</text>
</comment>
<comment type="catalytic activity">
    <reaction>
        <text>O-phospho-L-seryl-[protein] + H2O = L-seryl-[protein] + phosphate</text>
        <dbReference type="Rhea" id="RHEA:20629"/>
        <dbReference type="Rhea" id="RHEA-COMP:9863"/>
        <dbReference type="Rhea" id="RHEA-COMP:11604"/>
        <dbReference type="ChEBI" id="CHEBI:15377"/>
        <dbReference type="ChEBI" id="CHEBI:29999"/>
        <dbReference type="ChEBI" id="CHEBI:43474"/>
        <dbReference type="ChEBI" id="CHEBI:83421"/>
        <dbReference type="EC" id="3.1.3.16"/>
    </reaction>
</comment>
<comment type="catalytic activity">
    <reaction>
        <text>O-phospho-L-threonyl-[protein] + H2O = L-threonyl-[protein] + phosphate</text>
        <dbReference type="Rhea" id="RHEA:47004"/>
        <dbReference type="Rhea" id="RHEA-COMP:11060"/>
        <dbReference type="Rhea" id="RHEA-COMP:11605"/>
        <dbReference type="ChEBI" id="CHEBI:15377"/>
        <dbReference type="ChEBI" id="CHEBI:30013"/>
        <dbReference type="ChEBI" id="CHEBI:43474"/>
        <dbReference type="ChEBI" id="CHEBI:61977"/>
        <dbReference type="EC" id="3.1.3.16"/>
    </reaction>
</comment>
<comment type="cofactor">
    <cofactor evidence="2">
        <name>Mn(2+)</name>
        <dbReference type="ChEBI" id="CHEBI:29035"/>
    </cofactor>
    <text evidence="2">Binds 2 manganese ions per subunit.</text>
</comment>
<comment type="activity regulation">
    <text evidence="1">Inactivated by binding to URI1.</text>
</comment>
<comment type="subunit">
    <text evidence="2 3">PP1 comprises a catalytic subunit, PPP1CA, PPP1CB or PPP1CC, which is folded into its native form by inhibitor 2 and glycogen synthetase kinase 3, and then complexed to one or several targeting or regulatory subunits. PPP1R12A, PPP1R12B and PPP1R12C mediate binding to myosin. PPP1R3A (in skeletal muscle), PPP1R3B (in liver), PPP1R3C, PPP1R3D and PPP1R3F (in brain) mediate binding to glycogen. PPP1R15A and PPP1R15B mediate binding to EIF2S1. Part of a complex containing PPP1R15B, PP1 and NCK1/2. Interacts with PPP1R3B, PPP1R7 and CDCA2. Interacts with IKFZ1; the interaction targets PPP1CC to pericentromeric heterochromatin, dephosphorylates IKAROS, stabilizes it and prevents it from degradation. Interacts with NOM1 and PPP1R8. Component of the PTW/PP1 phosphatase complex, composed of PPP1R10/PNUTS, TOX4, WDR82, and PPP1CA or PPP1CB or PPP1CC. Interacts with PPP1R8. Interacts with NEK2. Interacts with PPP1R42; the interaction is direct. Interacts with URI1; the interaction is phosphorylation-dependent and occurs in a growth factor-dependent manner. Interacts with FOXP3. Interacts with TMEM225 (via RVxF motif). Interacts with MKI67. Interacts with RRP1B; this targets PPP1CC to the nucleolus (By similarity). Interacts with DYNLT4 (By similarity). Interacts (via RVxF motif) with FIRRM; regulates PLK1 kinase activity (By similarity). Interacts with the KNL1 complex subunit KNL1; the interaction is direct and mutually exclusive with KNL1 binding to microtubules (By similarity). Component of the SHOC2-MRAS-PP1c (SMP) complex consisting of SHOC2, GTP-bound M-Ras/MRAS and the catalytic subunit of protein phosphatase 1 (either PPP1CA, PPP1CB or PPP1CC) (By similarity). SHOC2 and PP1c preferably bind M-Ras/MRAS, but they also bind K-Ras/KRAS, N-Ras/NRAS and H-Ras/HRAS; these interactions are GTP-dependent and both SHOC2 and PP1c are required to form a stable complex (By similarity). Interacts with SHOC2 in the absence of Ras GTPases (By similarity).</text>
</comment>
<comment type="subcellular location">
    <subcellularLocation>
        <location evidence="2">Cytoplasm</location>
    </subcellularLocation>
    <subcellularLocation>
        <location evidence="2">Nucleus</location>
    </subcellularLocation>
    <subcellularLocation>
        <location evidence="2">Cleavage furrow</location>
    </subcellularLocation>
    <subcellularLocation>
        <location evidence="2">Nucleus</location>
        <location evidence="2">Nucleolus</location>
    </subcellularLocation>
    <subcellularLocation>
        <location evidence="2">Nucleus</location>
        <location evidence="2">Nucleoplasm</location>
    </subcellularLocation>
    <subcellularLocation>
        <location evidence="2">Chromosome</location>
        <location evidence="2">Centromere</location>
        <location evidence="2">Kinetochore</location>
    </subcellularLocation>
    <subcellularLocation>
        <location evidence="2">Nucleus speckle</location>
    </subcellularLocation>
    <subcellularLocation>
        <location evidence="2">Midbody</location>
    </subcellularLocation>
    <subcellularLocation>
        <location evidence="2">Mitochondrion</location>
    </subcellularLocation>
    <subcellularLocation>
        <location evidence="2">Cytoplasm</location>
        <location evidence="2">Cytoskeleton</location>
        <location evidence="2">Microtubule organizing center</location>
    </subcellularLocation>
    <text evidence="2 3">Colocalizes with SPZ1 in the nucleus. Colocalizes with URI1 at mitochondrion. Rapidly exchanges between the nucleolar, nucleoplasmic and cytoplasmic compartments. Highly mobile in cells and can be relocalized through interaction with targeting subunits. In the presence of PPP1R8 relocalizes from the nucleolus to nuclear speckles. Shows a dynamic targeting to specific sites throughout the cell cycle. Highly concentrated in nucleoli of interphase cells and localizes at kinetochores early in mitosis. Relocalization to chromosome-containing regions occurs at the transition from early to late anaphase. Also accumulates at the cleavage furrow and midbody by telophase.</text>
</comment>
<comment type="PTM">
    <text evidence="1">Phosphorylated by NEK2.</text>
</comment>
<comment type="similarity">
    <text evidence="4">Belongs to the PPP phosphatase family. PP-1 subfamily.</text>
</comment>
<comment type="online information" name="Protein Spotlight">
    <link uri="https://www.proteinspotlight.org/back_issues/032"/>
    <text>The things we forget - Issue 32 of March 2003</text>
</comment>
<evidence type="ECO:0000250" key="1"/>
<evidence type="ECO:0000250" key="2">
    <source>
        <dbReference type="UniProtKB" id="P36873"/>
    </source>
</evidence>
<evidence type="ECO:0000250" key="3">
    <source>
        <dbReference type="UniProtKB" id="P63087"/>
    </source>
</evidence>
<evidence type="ECO:0000305" key="4"/>
<reference key="1">
    <citation type="submission" date="2002-06" db="EMBL/GenBank/DDBJ databases">
        <title>Cloning and sequencing of catalytic subunit of protein phosphatase 1 gamma isoform from dog heart.</title>
        <authorList>
            <person name="Mishra S."/>
            <person name="Tiwari N."/>
            <person name="Rastogi S."/>
            <person name="Sabbah H.N."/>
            <person name="Gupta R.C."/>
        </authorList>
    </citation>
    <scope>NUCLEOTIDE SEQUENCE [MRNA]</scope>
    <source>
        <tissue>Heart</tissue>
    </source>
</reference>
<organism>
    <name type="scientific">Canis lupus familiaris</name>
    <name type="common">Dog</name>
    <name type="synonym">Canis familiaris</name>
    <dbReference type="NCBI Taxonomy" id="9615"/>
    <lineage>
        <taxon>Eukaryota</taxon>
        <taxon>Metazoa</taxon>
        <taxon>Chordata</taxon>
        <taxon>Craniata</taxon>
        <taxon>Vertebrata</taxon>
        <taxon>Euteleostomi</taxon>
        <taxon>Mammalia</taxon>
        <taxon>Eutheria</taxon>
        <taxon>Laurasiatheria</taxon>
        <taxon>Carnivora</taxon>
        <taxon>Caniformia</taxon>
        <taxon>Canidae</taxon>
        <taxon>Canis</taxon>
    </lineage>
</organism>
<sequence length="323" mass="37015">MADIDKLNIDSIIQRLLEVRGSKPGKNVQLQENEIRGLCLKSREIFLSQPILLELEAPLKICGDIHGQYYDLLRLFEYGGFPPESNYLFLGDYVDRGKQSLETICLLLAYKIKYPENFFLLRGNHECVSINRIYGFYDECKRRYNIKLWKTFTDCFNCLPIAAIVDEKIFCCHGGLSPDLQSMEQIRRIMRPTDVPDQGLLCDLLWSDPDKDVLGWGETDRGVSFTFGAEVVAKFLHKHDLDLICRAHQVVEDGYEFFAKRQLVTLFSAPNYCGEFDNAGAMMSVDETLMCSFQILKPAEKKKPNATRPVTPLRGMITKQAKK</sequence>
<keyword id="KW-0007">Acetylation</keyword>
<keyword id="KW-0119">Carbohydrate metabolism</keyword>
<keyword id="KW-0131">Cell cycle</keyword>
<keyword id="KW-0132">Cell division</keyword>
<keyword id="KW-0137">Centromere</keyword>
<keyword id="KW-0158">Chromosome</keyword>
<keyword id="KW-0963">Cytoplasm</keyword>
<keyword id="KW-0206">Cytoskeleton</keyword>
<keyword id="KW-0321">Glycogen metabolism</keyword>
<keyword id="KW-0378">Hydrolase</keyword>
<keyword id="KW-0995">Kinetochore</keyword>
<keyword id="KW-0464">Manganese</keyword>
<keyword id="KW-0479">Metal-binding</keyword>
<keyword id="KW-0496">Mitochondrion</keyword>
<keyword id="KW-0539">Nucleus</keyword>
<keyword id="KW-0597">Phosphoprotein</keyword>
<keyword id="KW-0904">Protein phosphatase</keyword>
<keyword id="KW-1185">Reference proteome</keyword>
<accession>Q8MJ46</accession>
<proteinExistence type="evidence at transcript level"/>
<feature type="initiator methionine" description="Removed" evidence="2">
    <location>
        <position position="1"/>
    </location>
</feature>
<feature type="chain" id="PRO_0000058786" description="Serine/threonine-protein phosphatase PP1-gamma catalytic subunit">
    <location>
        <begin position="2"/>
        <end position="323"/>
    </location>
</feature>
<feature type="active site" description="Proton donor" evidence="2">
    <location>
        <position position="125"/>
    </location>
</feature>
<feature type="binding site" evidence="2">
    <location>
        <position position="64"/>
    </location>
    <ligand>
        <name>Mn(2+)</name>
        <dbReference type="ChEBI" id="CHEBI:29035"/>
        <label>1</label>
    </ligand>
</feature>
<feature type="binding site" evidence="2">
    <location>
        <position position="64"/>
    </location>
    <ligand>
        <name>Mn(2+)</name>
        <dbReference type="ChEBI" id="CHEBI:29035"/>
        <label>2</label>
    </ligand>
</feature>
<feature type="binding site" evidence="2">
    <location>
        <position position="66"/>
    </location>
    <ligand>
        <name>Mn(2+)</name>
        <dbReference type="ChEBI" id="CHEBI:29035"/>
        <label>1</label>
    </ligand>
</feature>
<feature type="binding site" evidence="2">
    <location>
        <position position="92"/>
    </location>
    <ligand>
        <name>Mn(2+)</name>
        <dbReference type="ChEBI" id="CHEBI:29035"/>
        <label>1</label>
    </ligand>
</feature>
<feature type="binding site" evidence="2">
    <location>
        <position position="92"/>
    </location>
    <ligand>
        <name>Mn(2+)</name>
        <dbReference type="ChEBI" id="CHEBI:29035"/>
        <label>2</label>
    </ligand>
</feature>
<feature type="binding site" evidence="2">
    <location>
        <position position="124"/>
    </location>
    <ligand>
        <name>Mn(2+)</name>
        <dbReference type="ChEBI" id="CHEBI:29035"/>
        <label>2</label>
    </ligand>
</feature>
<feature type="binding site" evidence="2">
    <location>
        <position position="173"/>
    </location>
    <ligand>
        <name>Mn(2+)</name>
        <dbReference type="ChEBI" id="CHEBI:29035"/>
        <label>2</label>
    </ligand>
</feature>
<feature type="binding site" evidence="2">
    <location>
        <position position="248"/>
    </location>
    <ligand>
        <name>Mn(2+)</name>
        <dbReference type="ChEBI" id="CHEBI:29035"/>
        <label>2</label>
    </ligand>
</feature>
<feature type="modified residue" description="N-acetylalanine" evidence="2">
    <location>
        <position position="2"/>
    </location>
</feature>
<feature type="modified residue" description="Phosphothreonine" evidence="2">
    <location>
        <position position="307"/>
    </location>
</feature>
<feature type="modified residue" description="Phosphothreonine" evidence="2">
    <location>
        <position position="311"/>
    </location>
</feature>
<name>PP1G_CANLF</name>
<gene>
    <name type="primary">PPP1CC</name>
</gene>
<protein>
    <recommendedName>
        <fullName>Serine/threonine-protein phosphatase PP1-gamma catalytic subunit</fullName>
        <shortName>PP-1G</shortName>
        <ecNumber evidence="2">3.1.3.16</ecNumber>
    </recommendedName>
    <alternativeName>
        <fullName>Protein phosphatase 1C catalytic subunit</fullName>
    </alternativeName>
</protein>